<dbReference type="EMBL" id="CP000934">
    <property type="protein sequence ID" value="ACE84909.1"/>
    <property type="molecule type" value="Genomic_DNA"/>
</dbReference>
<dbReference type="RefSeq" id="WP_012488923.1">
    <property type="nucleotide sequence ID" value="NC_010995.1"/>
</dbReference>
<dbReference type="SMR" id="B3PF33"/>
<dbReference type="STRING" id="498211.CJA_3347"/>
<dbReference type="KEGG" id="cja:CJA_3347"/>
<dbReference type="eggNOG" id="COG0443">
    <property type="taxonomic scope" value="Bacteria"/>
</dbReference>
<dbReference type="HOGENOM" id="CLU_005965_2_1_6"/>
<dbReference type="OrthoDB" id="9766019at2"/>
<dbReference type="Proteomes" id="UP000001036">
    <property type="component" value="Chromosome"/>
</dbReference>
<dbReference type="GO" id="GO:0005524">
    <property type="term" value="F:ATP binding"/>
    <property type="evidence" value="ECO:0007669"/>
    <property type="project" value="UniProtKB-UniRule"/>
</dbReference>
<dbReference type="GO" id="GO:0140662">
    <property type="term" value="F:ATP-dependent protein folding chaperone"/>
    <property type="evidence" value="ECO:0007669"/>
    <property type="project" value="InterPro"/>
</dbReference>
<dbReference type="GO" id="GO:0051082">
    <property type="term" value="F:unfolded protein binding"/>
    <property type="evidence" value="ECO:0007669"/>
    <property type="project" value="InterPro"/>
</dbReference>
<dbReference type="CDD" id="cd10234">
    <property type="entry name" value="ASKHA_NBD_HSP70_DnaK-like"/>
    <property type="match status" value="1"/>
</dbReference>
<dbReference type="FunFam" id="2.60.34.10:FF:000014">
    <property type="entry name" value="Chaperone protein DnaK HSP70"/>
    <property type="match status" value="1"/>
</dbReference>
<dbReference type="FunFam" id="3.30.30.30:FF:000003">
    <property type="entry name" value="Heat shock protein 9"/>
    <property type="match status" value="1"/>
</dbReference>
<dbReference type="FunFam" id="1.20.1270.10:FF:000001">
    <property type="entry name" value="Molecular chaperone DnaK"/>
    <property type="match status" value="1"/>
</dbReference>
<dbReference type="FunFam" id="3.30.420.40:FF:000004">
    <property type="entry name" value="Molecular chaperone DnaK"/>
    <property type="match status" value="1"/>
</dbReference>
<dbReference type="FunFam" id="3.90.640.10:FF:000003">
    <property type="entry name" value="Molecular chaperone DnaK"/>
    <property type="match status" value="1"/>
</dbReference>
<dbReference type="Gene3D" id="1.20.1270.10">
    <property type="match status" value="1"/>
</dbReference>
<dbReference type="Gene3D" id="3.30.420.40">
    <property type="match status" value="2"/>
</dbReference>
<dbReference type="Gene3D" id="3.90.640.10">
    <property type="entry name" value="Actin, Chain A, domain 4"/>
    <property type="match status" value="1"/>
</dbReference>
<dbReference type="Gene3D" id="2.60.34.10">
    <property type="entry name" value="Substrate Binding Domain Of DNAk, Chain A, domain 1"/>
    <property type="match status" value="1"/>
</dbReference>
<dbReference type="HAMAP" id="MF_00332">
    <property type="entry name" value="DnaK"/>
    <property type="match status" value="1"/>
</dbReference>
<dbReference type="InterPro" id="IPR043129">
    <property type="entry name" value="ATPase_NBD"/>
</dbReference>
<dbReference type="InterPro" id="IPR012725">
    <property type="entry name" value="Chaperone_DnaK"/>
</dbReference>
<dbReference type="InterPro" id="IPR018181">
    <property type="entry name" value="Heat_shock_70_CS"/>
</dbReference>
<dbReference type="InterPro" id="IPR029048">
    <property type="entry name" value="HSP70_C_sf"/>
</dbReference>
<dbReference type="InterPro" id="IPR029047">
    <property type="entry name" value="HSP70_peptide-bd_sf"/>
</dbReference>
<dbReference type="InterPro" id="IPR013126">
    <property type="entry name" value="Hsp_70_fam"/>
</dbReference>
<dbReference type="NCBIfam" id="NF001413">
    <property type="entry name" value="PRK00290.1"/>
    <property type="match status" value="1"/>
</dbReference>
<dbReference type="NCBIfam" id="NF003520">
    <property type="entry name" value="PRK05183.1"/>
    <property type="match status" value="1"/>
</dbReference>
<dbReference type="NCBIfam" id="TIGR02350">
    <property type="entry name" value="prok_dnaK"/>
    <property type="match status" value="1"/>
</dbReference>
<dbReference type="PANTHER" id="PTHR19375">
    <property type="entry name" value="HEAT SHOCK PROTEIN 70KDA"/>
    <property type="match status" value="1"/>
</dbReference>
<dbReference type="Pfam" id="PF00012">
    <property type="entry name" value="HSP70"/>
    <property type="match status" value="1"/>
</dbReference>
<dbReference type="PRINTS" id="PR00301">
    <property type="entry name" value="HEATSHOCK70"/>
</dbReference>
<dbReference type="SUPFAM" id="SSF53067">
    <property type="entry name" value="Actin-like ATPase domain"/>
    <property type="match status" value="2"/>
</dbReference>
<dbReference type="SUPFAM" id="SSF100934">
    <property type="entry name" value="Heat shock protein 70kD (HSP70), C-terminal subdomain"/>
    <property type="match status" value="1"/>
</dbReference>
<dbReference type="SUPFAM" id="SSF100920">
    <property type="entry name" value="Heat shock protein 70kD (HSP70), peptide-binding domain"/>
    <property type="match status" value="1"/>
</dbReference>
<dbReference type="PROSITE" id="PS00297">
    <property type="entry name" value="HSP70_1"/>
    <property type="match status" value="1"/>
</dbReference>
<dbReference type="PROSITE" id="PS00329">
    <property type="entry name" value="HSP70_2"/>
    <property type="match status" value="1"/>
</dbReference>
<dbReference type="PROSITE" id="PS01036">
    <property type="entry name" value="HSP70_3"/>
    <property type="match status" value="1"/>
</dbReference>
<accession>B3PF33</accession>
<sequence length="640" mass="68108">MGKIIGIDLGTTNSCVSILEGGAPKVIENAEGDRTTPSIIAFTNDGEILVGQSAKRQAVTNPHNTLFAVKRLIGRKFKDDVVQKDISMVPYKIVAADNGDAWVEVKGEKKAPPQISAEVLKKMKKTAEDYLGEKVTEAVITVPAYFNDSQRQATKDAGKIAGLDVKRIINEPTAAALAYGLDKGKGDHTIAVYDLGGGTFDISIIEIADVDGEHQFEVLSTNGDTFLGGEDFDMRLIEFLADSFKKDTGIDLHNDPLALQRLKEAAEKAKIELSSSQQTEVNLPYITADATGPKHLVVKLTRAKLESLVEDLVNKSLEPVKQAIKDSGKSISDIDDVILVGGQTRMPLVQKAVADYFGKEPRKDVNPDEAVAIGAAIQGAVLAGDVKDVLLLDVTPLTLGIETMGGVATPLIEKNTTIPTKKSQVFSTADDNQTAVTIHVVQGERKQASQNKSLGRFDLADIPPAPRGMPQIEVTFDIDANGILNVSAKDKATGKEQSIVIKASSGLSDDEIQKMVKDAEANAEADRKFAELVGARNTLEGLIHATQKTVKEAGDKATADEKAAIDAAVKEAEEAVKGDDLARIEAATTKLTEASSSLAQKLYAEQQAAGAGAQQADGTGKAADDGVVDAEFEEVKEDNK</sequence>
<proteinExistence type="inferred from homology"/>
<feature type="chain" id="PRO_1000119683" description="Chaperone protein DnaK">
    <location>
        <begin position="1"/>
        <end position="640"/>
    </location>
</feature>
<feature type="region of interest" description="Disordered" evidence="2">
    <location>
        <begin position="606"/>
        <end position="640"/>
    </location>
</feature>
<feature type="compositionally biased region" description="Low complexity" evidence="2">
    <location>
        <begin position="606"/>
        <end position="621"/>
    </location>
</feature>
<feature type="compositionally biased region" description="Acidic residues" evidence="2">
    <location>
        <begin position="626"/>
        <end position="640"/>
    </location>
</feature>
<feature type="modified residue" description="Phosphothreonine; by autocatalysis" evidence="1">
    <location>
        <position position="199"/>
    </location>
</feature>
<name>DNAK_CELJU</name>
<organism>
    <name type="scientific">Cellvibrio japonicus (strain Ueda107)</name>
    <name type="common">Pseudomonas fluorescens subsp. cellulosa</name>
    <dbReference type="NCBI Taxonomy" id="498211"/>
    <lineage>
        <taxon>Bacteria</taxon>
        <taxon>Pseudomonadati</taxon>
        <taxon>Pseudomonadota</taxon>
        <taxon>Gammaproteobacteria</taxon>
        <taxon>Cellvibrionales</taxon>
        <taxon>Cellvibrionaceae</taxon>
        <taxon>Cellvibrio</taxon>
    </lineage>
</organism>
<evidence type="ECO:0000255" key="1">
    <source>
        <dbReference type="HAMAP-Rule" id="MF_00332"/>
    </source>
</evidence>
<evidence type="ECO:0000256" key="2">
    <source>
        <dbReference type="SAM" id="MobiDB-lite"/>
    </source>
</evidence>
<gene>
    <name evidence="1" type="primary">dnaK</name>
    <name type="ordered locus">CJA_3347</name>
</gene>
<keyword id="KW-0067">ATP-binding</keyword>
<keyword id="KW-0143">Chaperone</keyword>
<keyword id="KW-0547">Nucleotide-binding</keyword>
<keyword id="KW-0597">Phosphoprotein</keyword>
<keyword id="KW-1185">Reference proteome</keyword>
<keyword id="KW-0346">Stress response</keyword>
<protein>
    <recommendedName>
        <fullName evidence="1">Chaperone protein DnaK</fullName>
    </recommendedName>
    <alternativeName>
        <fullName evidence="1">HSP70</fullName>
    </alternativeName>
    <alternativeName>
        <fullName evidence="1">Heat shock 70 kDa protein</fullName>
    </alternativeName>
    <alternativeName>
        <fullName evidence="1">Heat shock protein 70</fullName>
    </alternativeName>
</protein>
<reference key="1">
    <citation type="journal article" date="2008" name="J. Bacteriol.">
        <title>Insights into plant cell wall degradation from the genome sequence of the soil bacterium Cellvibrio japonicus.</title>
        <authorList>
            <person name="DeBoy R.T."/>
            <person name="Mongodin E.F."/>
            <person name="Fouts D.E."/>
            <person name="Tailford L.E."/>
            <person name="Khouri H."/>
            <person name="Emerson J.B."/>
            <person name="Mohamoud Y."/>
            <person name="Watkins K."/>
            <person name="Henrissat B."/>
            <person name="Gilbert H.J."/>
            <person name="Nelson K.E."/>
        </authorList>
    </citation>
    <scope>NUCLEOTIDE SEQUENCE [LARGE SCALE GENOMIC DNA]</scope>
    <source>
        <strain>Ueda107</strain>
    </source>
</reference>
<comment type="function">
    <text evidence="1">Acts as a chaperone.</text>
</comment>
<comment type="induction">
    <text evidence="1">By stress conditions e.g. heat shock.</text>
</comment>
<comment type="similarity">
    <text evidence="1">Belongs to the heat shock protein 70 family.</text>
</comment>